<protein>
    <recommendedName>
        <fullName evidence="1">Apolipoprotein N-acyltransferase</fullName>
        <shortName evidence="1">ALP N-acyltransferase</shortName>
        <ecNumber evidence="1">2.3.1.269</ecNumber>
    </recommendedName>
</protein>
<dbReference type="EC" id="2.3.1.269" evidence="1"/>
<dbReference type="EMBL" id="CP001157">
    <property type="protein sequence ID" value="ACO77142.1"/>
    <property type="molecule type" value="Genomic_DNA"/>
</dbReference>
<dbReference type="RefSeq" id="WP_012699567.1">
    <property type="nucleotide sequence ID" value="NC_012560.1"/>
</dbReference>
<dbReference type="SMR" id="C1DMW2"/>
<dbReference type="STRING" id="322710.Avin_09030"/>
<dbReference type="EnsemblBacteria" id="ACO77142">
    <property type="protein sequence ID" value="ACO77142"/>
    <property type="gene ID" value="Avin_09030"/>
</dbReference>
<dbReference type="GeneID" id="88184276"/>
<dbReference type="KEGG" id="avn:Avin_09030"/>
<dbReference type="eggNOG" id="COG0815">
    <property type="taxonomic scope" value="Bacteria"/>
</dbReference>
<dbReference type="HOGENOM" id="CLU_019563_3_0_6"/>
<dbReference type="OrthoDB" id="9804277at2"/>
<dbReference type="UniPathway" id="UPA00666"/>
<dbReference type="Proteomes" id="UP000002424">
    <property type="component" value="Chromosome"/>
</dbReference>
<dbReference type="GO" id="GO:0005886">
    <property type="term" value="C:plasma membrane"/>
    <property type="evidence" value="ECO:0007669"/>
    <property type="project" value="UniProtKB-SubCell"/>
</dbReference>
<dbReference type="GO" id="GO:0016410">
    <property type="term" value="F:N-acyltransferase activity"/>
    <property type="evidence" value="ECO:0007669"/>
    <property type="project" value="UniProtKB-UniRule"/>
</dbReference>
<dbReference type="GO" id="GO:0042158">
    <property type="term" value="P:lipoprotein biosynthetic process"/>
    <property type="evidence" value="ECO:0007669"/>
    <property type="project" value="UniProtKB-UniRule"/>
</dbReference>
<dbReference type="CDD" id="cd07571">
    <property type="entry name" value="ALP_N-acyl_transferase"/>
    <property type="match status" value="1"/>
</dbReference>
<dbReference type="Gene3D" id="3.60.110.10">
    <property type="entry name" value="Carbon-nitrogen hydrolase"/>
    <property type="match status" value="1"/>
</dbReference>
<dbReference type="HAMAP" id="MF_01148">
    <property type="entry name" value="Lnt"/>
    <property type="match status" value="1"/>
</dbReference>
<dbReference type="InterPro" id="IPR004563">
    <property type="entry name" value="Apolipo_AcylTrfase"/>
</dbReference>
<dbReference type="InterPro" id="IPR003010">
    <property type="entry name" value="C-N_Hydrolase"/>
</dbReference>
<dbReference type="InterPro" id="IPR036526">
    <property type="entry name" value="C-N_Hydrolase_sf"/>
</dbReference>
<dbReference type="InterPro" id="IPR045378">
    <property type="entry name" value="LNT_N"/>
</dbReference>
<dbReference type="NCBIfam" id="TIGR00546">
    <property type="entry name" value="lnt"/>
    <property type="match status" value="1"/>
</dbReference>
<dbReference type="PANTHER" id="PTHR38686">
    <property type="entry name" value="APOLIPOPROTEIN N-ACYLTRANSFERASE"/>
    <property type="match status" value="1"/>
</dbReference>
<dbReference type="PANTHER" id="PTHR38686:SF1">
    <property type="entry name" value="APOLIPOPROTEIN N-ACYLTRANSFERASE"/>
    <property type="match status" value="1"/>
</dbReference>
<dbReference type="Pfam" id="PF00795">
    <property type="entry name" value="CN_hydrolase"/>
    <property type="match status" value="1"/>
</dbReference>
<dbReference type="Pfam" id="PF20154">
    <property type="entry name" value="LNT_N"/>
    <property type="match status" value="1"/>
</dbReference>
<dbReference type="SUPFAM" id="SSF56317">
    <property type="entry name" value="Carbon-nitrogen hydrolase"/>
    <property type="match status" value="1"/>
</dbReference>
<dbReference type="PROSITE" id="PS50263">
    <property type="entry name" value="CN_HYDROLASE"/>
    <property type="match status" value="1"/>
</dbReference>
<name>LNT_AZOVD</name>
<keyword id="KW-0012">Acyltransferase</keyword>
<keyword id="KW-0997">Cell inner membrane</keyword>
<keyword id="KW-1003">Cell membrane</keyword>
<keyword id="KW-0472">Membrane</keyword>
<keyword id="KW-0808">Transferase</keyword>
<keyword id="KW-0812">Transmembrane</keyword>
<keyword id="KW-1133">Transmembrane helix</keyword>
<proteinExistence type="inferred from homology"/>
<accession>C1DMW2</accession>
<evidence type="ECO:0000255" key="1">
    <source>
        <dbReference type="HAMAP-Rule" id="MF_01148"/>
    </source>
</evidence>
<reference key="1">
    <citation type="journal article" date="2009" name="J. Bacteriol.">
        <title>Genome sequence of Azotobacter vinelandii, an obligate aerobe specialized to support diverse anaerobic metabolic processes.</title>
        <authorList>
            <person name="Setubal J.C."/>
            <person name="Dos Santos P."/>
            <person name="Goldman B.S."/>
            <person name="Ertesvaag H."/>
            <person name="Espin G."/>
            <person name="Rubio L.M."/>
            <person name="Valla S."/>
            <person name="Almeida N.F."/>
            <person name="Balasubramanian D."/>
            <person name="Cromes L."/>
            <person name="Curatti L."/>
            <person name="Du Z."/>
            <person name="Godsy E."/>
            <person name="Goodner B."/>
            <person name="Hellner-Burris K."/>
            <person name="Hernandez J.A."/>
            <person name="Houmiel K."/>
            <person name="Imperial J."/>
            <person name="Kennedy C."/>
            <person name="Larson T.J."/>
            <person name="Latreille P."/>
            <person name="Ligon L.S."/>
            <person name="Lu J."/>
            <person name="Maerk M."/>
            <person name="Miller N.M."/>
            <person name="Norton S."/>
            <person name="O'Carroll I.P."/>
            <person name="Paulsen I."/>
            <person name="Raulfs E.C."/>
            <person name="Roemer R."/>
            <person name="Rosser J."/>
            <person name="Segura D."/>
            <person name="Slater S."/>
            <person name="Stricklin S.L."/>
            <person name="Studholme D.J."/>
            <person name="Sun J."/>
            <person name="Viana C.J."/>
            <person name="Wallin E."/>
            <person name="Wang B."/>
            <person name="Wheeler C."/>
            <person name="Zhu H."/>
            <person name="Dean D.R."/>
            <person name="Dixon R."/>
            <person name="Wood D."/>
        </authorList>
    </citation>
    <scope>NUCLEOTIDE SEQUENCE [LARGE SCALE GENOMIC DNA]</scope>
    <source>
        <strain>DJ / ATCC BAA-1303</strain>
    </source>
</reference>
<organism>
    <name type="scientific">Azotobacter vinelandii (strain DJ / ATCC BAA-1303)</name>
    <dbReference type="NCBI Taxonomy" id="322710"/>
    <lineage>
        <taxon>Bacteria</taxon>
        <taxon>Pseudomonadati</taxon>
        <taxon>Pseudomonadota</taxon>
        <taxon>Gammaproteobacteria</taxon>
        <taxon>Pseudomonadales</taxon>
        <taxon>Pseudomonadaceae</taxon>
        <taxon>Azotobacter</taxon>
    </lineage>
</organism>
<comment type="function">
    <text evidence="1">Catalyzes the phospholipid dependent N-acylation of the N-terminal cysteine of apolipoprotein, the last step in lipoprotein maturation.</text>
</comment>
<comment type="catalytic activity">
    <reaction evidence="1">
        <text>N-terminal S-1,2-diacyl-sn-glyceryl-L-cysteinyl-[lipoprotein] + a glycerophospholipid = N-acyl-S-1,2-diacyl-sn-glyceryl-L-cysteinyl-[lipoprotein] + a 2-acyl-sn-glycero-3-phospholipid + H(+)</text>
        <dbReference type="Rhea" id="RHEA:48228"/>
        <dbReference type="Rhea" id="RHEA-COMP:14681"/>
        <dbReference type="Rhea" id="RHEA-COMP:14684"/>
        <dbReference type="ChEBI" id="CHEBI:15378"/>
        <dbReference type="ChEBI" id="CHEBI:136912"/>
        <dbReference type="ChEBI" id="CHEBI:140656"/>
        <dbReference type="ChEBI" id="CHEBI:140657"/>
        <dbReference type="ChEBI" id="CHEBI:140660"/>
        <dbReference type="EC" id="2.3.1.269"/>
    </reaction>
</comment>
<comment type="pathway">
    <text evidence="1">Protein modification; lipoprotein biosynthesis (N-acyl transfer).</text>
</comment>
<comment type="subcellular location">
    <subcellularLocation>
        <location evidence="1">Cell inner membrane</location>
        <topology evidence="1">Multi-pass membrane protein</topology>
    </subcellularLocation>
</comment>
<comment type="similarity">
    <text evidence="1">Belongs to the CN hydrolase family. Apolipoprotein N-acyltransferase subfamily.</text>
</comment>
<gene>
    <name evidence="1" type="primary">lnt</name>
    <name type="ordered locus">Avin_09030</name>
</gene>
<sequence>MRWITRPGWPGNLLALAAGALMPLAQAPFDLWPLALLSLALLYLGLREAPPRAALWRGWCYGFGLYAVGTSWIYISIHDYGAASLPLAGLLTLALMLALAFFFALPAWLWSRWLRRSDAPLADALAFAALWLALEGFRGWFLTGFPWLYAGYSQLEGPLAGLAPLGGVWLLSFALALSAALLVNLPRLLRRPPALLGALVLLLAPWATGLALRGHAWTAPAGAPLKVAAVQGNVEQNLKWDPEQLSAQLLLYRDLTLQRAAPVDLVVWPETAVPILKEYAENYLAGLDRYARPRHMALLTGVPIRRHNAQGEPRYYNGIVVAGEGSGTYLKQKLVPFGEYVPLQEVLRGLIAFFDLPMSDFARGPADQPLLEARGWRIAPYICYEVVYPEFAAGLAARSDLLLTISNDAWFGSSIGPLQHLQMAQMRALEAGRWMIRTTNNGVTALIDPFGRITERLPQFQRAVLYGEVTPMQGLTPYLRWRAWPLAGLAVLLLGWALLRRRAERAAPGPAVEAQR</sequence>
<feature type="chain" id="PRO_1000213662" description="Apolipoprotein N-acyltransferase">
    <location>
        <begin position="1"/>
        <end position="516"/>
    </location>
</feature>
<feature type="transmembrane region" description="Helical" evidence="1">
    <location>
        <begin position="24"/>
        <end position="44"/>
    </location>
</feature>
<feature type="transmembrane region" description="Helical" evidence="1">
    <location>
        <begin position="58"/>
        <end position="78"/>
    </location>
</feature>
<feature type="transmembrane region" description="Helical" evidence="1">
    <location>
        <begin position="90"/>
        <end position="110"/>
    </location>
</feature>
<feature type="transmembrane region" description="Helical" evidence="1">
    <location>
        <begin position="125"/>
        <end position="145"/>
    </location>
</feature>
<feature type="transmembrane region" description="Helical" evidence="1">
    <location>
        <begin position="163"/>
        <end position="183"/>
    </location>
</feature>
<feature type="transmembrane region" description="Helical" evidence="1">
    <location>
        <begin position="192"/>
        <end position="212"/>
    </location>
</feature>
<feature type="transmembrane region" description="Helical" evidence="1">
    <location>
        <begin position="479"/>
        <end position="499"/>
    </location>
</feature>
<feature type="domain" description="CN hydrolase" evidence="1">
    <location>
        <begin position="230"/>
        <end position="471"/>
    </location>
</feature>
<feature type="active site" description="Proton acceptor" evidence="1">
    <location>
        <position position="270"/>
    </location>
</feature>
<feature type="active site" evidence="1">
    <location>
        <position position="331"/>
    </location>
</feature>
<feature type="active site" description="Nucleophile" evidence="1">
    <location>
        <position position="383"/>
    </location>
</feature>